<organism>
    <name type="scientific">Caenorhabditis elegans</name>
    <dbReference type="NCBI Taxonomy" id="6239"/>
    <lineage>
        <taxon>Eukaryota</taxon>
        <taxon>Metazoa</taxon>
        <taxon>Ecdysozoa</taxon>
        <taxon>Nematoda</taxon>
        <taxon>Chromadorea</taxon>
        <taxon>Rhabditida</taxon>
        <taxon>Rhabditina</taxon>
        <taxon>Rhabditomorpha</taxon>
        <taxon>Rhabditoidea</taxon>
        <taxon>Rhabditidae</taxon>
        <taxon>Peloderinae</taxon>
        <taxon>Caenorhabditis</taxon>
    </lineage>
</organism>
<protein>
    <recommendedName>
        <fullName evidence="2">Small ribosomal subunit protein uS17m</fullName>
    </recommendedName>
    <alternativeName>
        <fullName>28S ribosomal protein S17, mitochondrial</fullName>
        <shortName>MRP-S17</shortName>
        <shortName>S17mt</shortName>
    </alternativeName>
</protein>
<dbReference type="EMBL" id="FO080365">
    <property type="protein sequence ID" value="CCD63200.1"/>
    <property type="molecule type" value="Genomic_DNA"/>
</dbReference>
<dbReference type="PIR" id="F88482">
    <property type="entry name" value="F88482"/>
</dbReference>
<dbReference type="RefSeq" id="NP_498409.1">
    <property type="nucleotide sequence ID" value="NM_066008.6"/>
</dbReference>
<dbReference type="SMR" id="Q11189"/>
<dbReference type="BioGRID" id="41130">
    <property type="interactions" value="12"/>
</dbReference>
<dbReference type="DIP" id="DIP-26052N"/>
<dbReference type="FunCoup" id="Q11189">
    <property type="interactions" value="2218"/>
</dbReference>
<dbReference type="IntAct" id="Q11189">
    <property type="interactions" value="4"/>
</dbReference>
<dbReference type="STRING" id="6239.C05D11.10.1"/>
<dbReference type="PaxDb" id="6239-C05D11.10"/>
<dbReference type="PeptideAtlas" id="Q11189"/>
<dbReference type="EnsemblMetazoa" id="C05D11.10.1">
    <property type="protein sequence ID" value="C05D11.10.1"/>
    <property type="gene ID" value="WBGene00015487"/>
</dbReference>
<dbReference type="GeneID" id="175912"/>
<dbReference type="KEGG" id="cel:CELE_C05D11.10"/>
<dbReference type="UCSC" id="C05D11.10">
    <property type="organism name" value="c. elegans"/>
</dbReference>
<dbReference type="AGR" id="WB:WBGene00015487"/>
<dbReference type="CTD" id="175912"/>
<dbReference type="WormBase" id="C05D11.10">
    <property type="protein sequence ID" value="CE01129"/>
    <property type="gene ID" value="WBGene00015487"/>
    <property type="gene designation" value="mrps-17"/>
</dbReference>
<dbReference type="eggNOG" id="KOG3447">
    <property type="taxonomic scope" value="Eukaryota"/>
</dbReference>
<dbReference type="GeneTree" id="ENSGT00530000064130"/>
<dbReference type="HOGENOM" id="CLU_113468_0_0_1"/>
<dbReference type="InParanoid" id="Q11189"/>
<dbReference type="OMA" id="GNDKIPC"/>
<dbReference type="OrthoDB" id="274752at2759"/>
<dbReference type="PhylomeDB" id="Q11189"/>
<dbReference type="Reactome" id="R-CEL-5389840">
    <property type="pathway name" value="Mitochondrial translation elongation"/>
</dbReference>
<dbReference type="Reactome" id="R-CEL-5419276">
    <property type="pathway name" value="Mitochondrial translation termination"/>
</dbReference>
<dbReference type="PRO" id="PR:Q11189"/>
<dbReference type="Proteomes" id="UP000001940">
    <property type="component" value="Chromosome III"/>
</dbReference>
<dbReference type="Bgee" id="WBGene00015487">
    <property type="expression patterns" value="Expressed in larva and 4 other cell types or tissues"/>
</dbReference>
<dbReference type="GO" id="GO:0005763">
    <property type="term" value="C:mitochondrial small ribosomal subunit"/>
    <property type="evidence" value="ECO:0000250"/>
    <property type="project" value="UniProtKB"/>
</dbReference>
<dbReference type="GO" id="GO:0003723">
    <property type="term" value="F:RNA binding"/>
    <property type="evidence" value="ECO:0007669"/>
    <property type="project" value="UniProtKB-KW"/>
</dbReference>
<dbReference type="GO" id="GO:0003735">
    <property type="term" value="F:structural constituent of ribosome"/>
    <property type="evidence" value="ECO:0000250"/>
    <property type="project" value="UniProtKB"/>
</dbReference>
<dbReference type="GO" id="GO:0032543">
    <property type="term" value="P:mitochondrial translation"/>
    <property type="evidence" value="ECO:0000250"/>
    <property type="project" value="UniProtKB"/>
</dbReference>
<dbReference type="FunFam" id="2.40.50.140:FF:000479">
    <property type="entry name" value="28S ribosomal protein S17, mitochondrial"/>
    <property type="match status" value="1"/>
</dbReference>
<dbReference type="Gene3D" id="2.40.50.140">
    <property type="entry name" value="Nucleic acid-binding proteins"/>
    <property type="match status" value="1"/>
</dbReference>
<dbReference type="InterPro" id="IPR012340">
    <property type="entry name" value="NA-bd_OB-fold"/>
</dbReference>
<dbReference type="InterPro" id="IPR039193">
    <property type="entry name" value="Ribosomal_uS17m_metazoa"/>
</dbReference>
<dbReference type="PANTHER" id="PTHR24088">
    <property type="entry name" value="28S RIBOSOMAL PROTEIN S17, MITOCHONDRIAL"/>
    <property type="match status" value="1"/>
</dbReference>
<dbReference type="PANTHER" id="PTHR24088:SF0">
    <property type="entry name" value="SMALL RIBOSOMAL SUBUNIT PROTEIN US17M"/>
    <property type="match status" value="1"/>
</dbReference>
<dbReference type="SUPFAM" id="SSF50249">
    <property type="entry name" value="Nucleic acid-binding proteins"/>
    <property type="match status" value="1"/>
</dbReference>
<reference key="1">
    <citation type="journal article" date="1998" name="Science">
        <title>Genome sequence of the nematode C. elegans: a platform for investigating biology.</title>
        <authorList>
            <consortium name="The C. elegans sequencing consortium"/>
        </authorList>
    </citation>
    <scope>NUCLEOTIDE SEQUENCE [LARGE SCALE GENOMIC DNA]</scope>
    <source>
        <strain>Bristol N2</strain>
    </source>
</reference>
<gene>
    <name type="primary">mrps-17</name>
    <name type="ORF">C05D11.10</name>
</gene>
<proteinExistence type="inferred from homology"/>
<feature type="chain" id="PRO_0000065151" description="Small ribosomal subunit protein uS17m">
    <location>
        <begin position="1"/>
        <end position="160"/>
    </location>
</feature>
<comment type="subunit">
    <text evidence="1">Component of the mitochondrial ribosome small subunit (28S) which comprises a 12S rRNA and about 30 distinct proteins.</text>
</comment>
<comment type="subcellular location">
    <subcellularLocation>
        <location evidence="1">Mitochondrion</location>
    </subcellularLocation>
</comment>
<comment type="similarity">
    <text evidence="2">Belongs to the universal ribosomal protein uS17 family.</text>
</comment>
<accession>Q11189</accession>
<name>RT17_CAEEL</name>
<evidence type="ECO:0000250" key="1"/>
<evidence type="ECO:0000305" key="2"/>
<keyword id="KW-0496">Mitochondrion</keyword>
<keyword id="KW-1185">Reference proteome</keyword>
<keyword id="KW-0687">Ribonucleoprotein</keyword>
<keyword id="KW-0689">Ribosomal protein</keyword>
<keyword id="KW-0694">RNA-binding</keyword>
<sequence length="160" mass="18394">MPKTSVWKTRVGTQILMGKITDITQIGIDRIPCAQVRCQMNEFNIYLKKYFARSFDFWALDKTSLGNIGDTVLIKQIDGSSRPKANVSHAVDRVVFKFGNIVDPVTGRKIFNDTFADEIDLKKVLVEEVVDKPLEEESMLFEERRALQIRRLEQEKEANV</sequence>